<dbReference type="EC" id="6.3.1.20" evidence="1"/>
<dbReference type="EMBL" id="CP000720">
    <property type="protein sequence ID" value="ABS47732.1"/>
    <property type="molecule type" value="Genomic_DNA"/>
</dbReference>
<dbReference type="RefSeq" id="WP_002211816.1">
    <property type="nucleotide sequence ID" value="NC_009708.1"/>
</dbReference>
<dbReference type="SMR" id="A7FHI0"/>
<dbReference type="KEGG" id="ypi:YpsIP31758_1733"/>
<dbReference type="HOGENOM" id="CLU_022986_0_1_6"/>
<dbReference type="UniPathway" id="UPA00537">
    <property type="reaction ID" value="UER00594"/>
</dbReference>
<dbReference type="UniPathway" id="UPA00537">
    <property type="reaction ID" value="UER00595"/>
</dbReference>
<dbReference type="Proteomes" id="UP000002412">
    <property type="component" value="Chromosome"/>
</dbReference>
<dbReference type="GO" id="GO:0005829">
    <property type="term" value="C:cytosol"/>
    <property type="evidence" value="ECO:0007669"/>
    <property type="project" value="TreeGrafter"/>
</dbReference>
<dbReference type="GO" id="GO:0005524">
    <property type="term" value="F:ATP binding"/>
    <property type="evidence" value="ECO:0007669"/>
    <property type="project" value="UniProtKB-KW"/>
</dbReference>
<dbReference type="GO" id="GO:0016979">
    <property type="term" value="F:lipoate-protein ligase activity"/>
    <property type="evidence" value="ECO:0007669"/>
    <property type="project" value="UniProtKB-UniRule"/>
</dbReference>
<dbReference type="GO" id="GO:0017118">
    <property type="term" value="F:lipoyltransferase activity"/>
    <property type="evidence" value="ECO:0007669"/>
    <property type="project" value="TreeGrafter"/>
</dbReference>
<dbReference type="GO" id="GO:0036211">
    <property type="term" value="P:protein modification process"/>
    <property type="evidence" value="ECO:0007669"/>
    <property type="project" value="InterPro"/>
</dbReference>
<dbReference type="CDD" id="cd16443">
    <property type="entry name" value="LplA"/>
    <property type="match status" value="1"/>
</dbReference>
<dbReference type="FunFam" id="3.30.930.10:FF:000024">
    <property type="entry name" value="Lipoate-protein ligase A"/>
    <property type="match status" value="1"/>
</dbReference>
<dbReference type="Gene3D" id="3.30.930.10">
    <property type="entry name" value="Bira Bifunctional Protein, Domain 2"/>
    <property type="match status" value="1"/>
</dbReference>
<dbReference type="Gene3D" id="3.30.390.50">
    <property type="entry name" value="CO dehydrogenase flavoprotein, C-terminal domain"/>
    <property type="match status" value="1"/>
</dbReference>
<dbReference type="HAMAP" id="MF_01602">
    <property type="entry name" value="LplA"/>
    <property type="match status" value="1"/>
</dbReference>
<dbReference type="InterPro" id="IPR045864">
    <property type="entry name" value="aa-tRNA-synth_II/BPL/LPL"/>
</dbReference>
<dbReference type="InterPro" id="IPR004143">
    <property type="entry name" value="BPL_LPL_catalytic"/>
</dbReference>
<dbReference type="InterPro" id="IPR023741">
    <property type="entry name" value="Lipoate_ligase_A"/>
</dbReference>
<dbReference type="InterPro" id="IPR019491">
    <property type="entry name" value="Lipoate_protein_ligase_C"/>
</dbReference>
<dbReference type="InterPro" id="IPR004562">
    <property type="entry name" value="LipoylTrfase_LipoateP_Ligase"/>
</dbReference>
<dbReference type="NCBIfam" id="TIGR00545">
    <property type="entry name" value="lipoyltrans"/>
    <property type="match status" value="1"/>
</dbReference>
<dbReference type="PANTHER" id="PTHR12561">
    <property type="entry name" value="LIPOATE-PROTEIN LIGASE"/>
    <property type="match status" value="1"/>
</dbReference>
<dbReference type="PANTHER" id="PTHR12561:SF3">
    <property type="entry name" value="LIPOYLTRANSFERASE 1, MITOCHONDRIAL"/>
    <property type="match status" value="1"/>
</dbReference>
<dbReference type="Pfam" id="PF10437">
    <property type="entry name" value="Lip_prot_lig_C"/>
    <property type="match status" value="1"/>
</dbReference>
<dbReference type="Pfam" id="PF21948">
    <property type="entry name" value="LplA-B_cat"/>
    <property type="match status" value="1"/>
</dbReference>
<dbReference type="SUPFAM" id="SSF55681">
    <property type="entry name" value="Class II aaRS and biotin synthetases"/>
    <property type="match status" value="1"/>
</dbReference>
<dbReference type="SUPFAM" id="SSF82649">
    <property type="entry name" value="SufE/NifU"/>
    <property type="match status" value="1"/>
</dbReference>
<dbReference type="PROSITE" id="PS51733">
    <property type="entry name" value="BPL_LPL_CATALYTIC"/>
    <property type="match status" value="1"/>
</dbReference>
<comment type="function">
    <text evidence="1">Catalyzes both the ATP-dependent activation of exogenously supplied lipoate to lipoyl-AMP and the transfer of the activated lipoyl onto the lipoyl domains of lipoate-dependent enzymes.</text>
</comment>
<comment type="catalytic activity">
    <reaction evidence="1">
        <text>L-lysyl-[lipoyl-carrier protein] + (R)-lipoate + ATP = N(6)-[(R)-lipoyl]-L-lysyl-[lipoyl-carrier protein] + AMP + diphosphate + H(+)</text>
        <dbReference type="Rhea" id="RHEA:49288"/>
        <dbReference type="Rhea" id="RHEA-COMP:10500"/>
        <dbReference type="Rhea" id="RHEA-COMP:10502"/>
        <dbReference type="ChEBI" id="CHEBI:15378"/>
        <dbReference type="ChEBI" id="CHEBI:29969"/>
        <dbReference type="ChEBI" id="CHEBI:30616"/>
        <dbReference type="ChEBI" id="CHEBI:33019"/>
        <dbReference type="ChEBI" id="CHEBI:83088"/>
        <dbReference type="ChEBI" id="CHEBI:83099"/>
        <dbReference type="ChEBI" id="CHEBI:456215"/>
        <dbReference type="EC" id="6.3.1.20"/>
    </reaction>
</comment>
<comment type="pathway">
    <text evidence="1">Protein modification; protein lipoylation via exogenous pathway; protein N(6)-(lipoyl)lysine from lipoate: step 1/2.</text>
</comment>
<comment type="pathway">
    <text evidence="1">Protein modification; protein lipoylation via exogenous pathway; protein N(6)-(lipoyl)lysine from lipoate: step 2/2.</text>
</comment>
<comment type="subunit">
    <text evidence="1">Monomer.</text>
</comment>
<comment type="subcellular location">
    <subcellularLocation>
        <location evidence="1">Cytoplasm</location>
    </subcellularLocation>
</comment>
<comment type="miscellaneous">
    <text evidence="1">In the transfer reaction, the free carboxyl group of lipoic acid is attached via an amide linkage to the epsilon-amino group of a specific lysine residue of lipoyl domains of lipoate-dependent enzymes.</text>
</comment>
<comment type="similarity">
    <text evidence="1">Belongs to the LplA family.</text>
</comment>
<reference key="1">
    <citation type="journal article" date="2007" name="PLoS Genet.">
        <title>The complete genome sequence of Yersinia pseudotuberculosis IP31758, the causative agent of Far East scarlet-like fever.</title>
        <authorList>
            <person name="Eppinger M."/>
            <person name="Rosovitz M.J."/>
            <person name="Fricke W.F."/>
            <person name="Rasko D.A."/>
            <person name="Kokorina G."/>
            <person name="Fayolle C."/>
            <person name="Lindler L.E."/>
            <person name="Carniel E."/>
            <person name="Ravel J."/>
        </authorList>
    </citation>
    <scope>NUCLEOTIDE SEQUENCE [LARGE SCALE GENOMIC DNA]</scope>
    <source>
        <strain>IP 31758</strain>
    </source>
</reference>
<feature type="chain" id="PRO_1000069392" description="Lipoate-protein ligase A">
    <location>
        <begin position="1"/>
        <end position="338"/>
    </location>
</feature>
<feature type="domain" description="BPL/LPL catalytic" evidence="2">
    <location>
        <begin position="29"/>
        <end position="216"/>
    </location>
</feature>
<feature type="binding site" evidence="1">
    <location>
        <position position="71"/>
    </location>
    <ligand>
        <name>ATP</name>
        <dbReference type="ChEBI" id="CHEBI:30616"/>
    </ligand>
</feature>
<feature type="binding site" evidence="1">
    <location>
        <begin position="76"/>
        <end position="79"/>
    </location>
    <ligand>
        <name>ATP</name>
        <dbReference type="ChEBI" id="CHEBI:30616"/>
    </ligand>
</feature>
<feature type="binding site" evidence="1">
    <location>
        <position position="134"/>
    </location>
    <ligand>
        <name>(R)-lipoate</name>
        <dbReference type="ChEBI" id="CHEBI:83088"/>
    </ligand>
</feature>
<feature type="binding site" evidence="1">
    <location>
        <position position="134"/>
    </location>
    <ligand>
        <name>ATP</name>
        <dbReference type="ChEBI" id="CHEBI:30616"/>
    </ligand>
</feature>
<proteinExistence type="inferred from homology"/>
<organism>
    <name type="scientific">Yersinia pseudotuberculosis serotype O:1b (strain IP 31758)</name>
    <dbReference type="NCBI Taxonomy" id="349747"/>
    <lineage>
        <taxon>Bacteria</taxon>
        <taxon>Pseudomonadati</taxon>
        <taxon>Pseudomonadota</taxon>
        <taxon>Gammaproteobacteria</taxon>
        <taxon>Enterobacterales</taxon>
        <taxon>Yersiniaceae</taxon>
        <taxon>Yersinia</taxon>
    </lineage>
</organism>
<protein>
    <recommendedName>
        <fullName evidence="1">Lipoate-protein ligase A</fullName>
        <ecNumber evidence="1">6.3.1.20</ecNumber>
    </recommendedName>
    <alternativeName>
        <fullName evidence="1">Lipoate--protein ligase</fullName>
    </alternativeName>
</protein>
<gene>
    <name evidence="1" type="primary">lplA</name>
    <name type="ordered locus">YpsIP31758_1733</name>
</gene>
<name>LPLA_YERP3</name>
<keyword id="KW-0067">ATP-binding</keyword>
<keyword id="KW-0963">Cytoplasm</keyword>
<keyword id="KW-0436">Ligase</keyword>
<keyword id="KW-0547">Nucleotide-binding</keyword>
<accession>A7FHI0</accession>
<sequence>MSSLRLLISDSYDPWFNLAVEECIFRQMSPNQRVLFLWRNADTVVIGRAQNPWKECNTRRMEQDGVKLARRSSGGGAVFHDLGNTCFTFMAGKPGYDKTISTQIILNALASLGIQATASGRNDLVVINGEDERKVSGSAYKETKDRGFHHGTLLLNADLSRLADYLNPDPKKLQAKGITSVRSRVTNLVELLPGIDHGKIRTAIEQAFFAYYDEQVSAEVISPQSLPNLPGFTEQFAKQSSWEWNFGQAPAFSHVVDTRFIWGGIELHFDVLHGAIDRCQIFTDSLNPTPLEALAQRLQGAAYRPDAIDKICQHWIDDFPELQTELQQACHWLVEVLR</sequence>
<evidence type="ECO:0000255" key="1">
    <source>
        <dbReference type="HAMAP-Rule" id="MF_01602"/>
    </source>
</evidence>
<evidence type="ECO:0000255" key="2">
    <source>
        <dbReference type="PROSITE-ProRule" id="PRU01067"/>
    </source>
</evidence>